<evidence type="ECO:0000250" key="1">
    <source>
        <dbReference type="UniProtKB" id="Q96242"/>
    </source>
</evidence>
<evidence type="ECO:0000255" key="2"/>
<evidence type="ECO:0000269" key="3">
    <source>
    </source>
</evidence>
<evidence type="ECO:0000303" key="4">
    <source>
    </source>
</evidence>
<evidence type="ECO:0000305" key="5"/>
<evidence type="ECO:0000312" key="6">
    <source>
        <dbReference type="EMBL" id="KEH36885.1"/>
    </source>
</evidence>
<feature type="chain" id="PRO_0000444125" description="Cytochrome P450 716A67">
    <location>
        <begin position="1"/>
        <end position="520"/>
    </location>
</feature>
<feature type="transmembrane region" description="Helical" evidence="2">
    <location>
        <begin position="4"/>
        <end position="24"/>
    </location>
</feature>
<feature type="binding site" description="axial binding residue" evidence="1">
    <location>
        <position position="466"/>
    </location>
    <ligand>
        <name>heme</name>
        <dbReference type="ChEBI" id="CHEBI:30413"/>
    </ligand>
    <ligandPart>
        <name>Fe</name>
        <dbReference type="ChEBI" id="CHEBI:18248"/>
    </ligandPart>
</feature>
<dbReference type="EC" id="1.14.13.-" evidence="5"/>
<dbReference type="EMBL" id="DQ335780">
    <property type="protein sequence ID" value="ABC59075.1"/>
    <property type="molecule type" value="mRNA"/>
</dbReference>
<dbReference type="EMBL" id="CM001218">
    <property type="protein sequence ID" value="KEH36885.1"/>
    <property type="molecule type" value="Genomic_DNA"/>
</dbReference>
<dbReference type="RefSeq" id="XP_013462851.1">
    <property type="nucleotide sequence ID" value="XM_013607397.1"/>
</dbReference>
<dbReference type="SMR" id="Q2MJ21"/>
<dbReference type="STRING" id="3880.Q2MJ21"/>
<dbReference type="EnsemblPlants" id="rna8251">
    <property type="protein sequence ID" value="RHN72525.1"/>
    <property type="gene ID" value="gene8251"/>
</dbReference>
<dbReference type="GeneID" id="25486186"/>
<dbReference type="Gramene" id="rna8251">
    <property type="protein sequence ID" value="RHN72525.1"/>
    <property type="gene ID" value="gene8251"/>
</dbReference>
<dbReference type="KEGG" id="ag:ABC59075"/>
<dbReference type="KEGG" id="mtr:25486186"/>
<dbReference type="HOGENOM" id="CLU_001570_5_0_1"/>
<dbReference type="OrthoDB" id="1470350at2759"/>
<dbReference type="Proteomes" id="UP000002051">
    <property type="component" value="Chromosome 2"/>
</dbReference>
<dbReference type="ExpressionAtlas" id="Q2MJ21">
    <property type="expression patterns" value="differential"/>
</dbReference>
<dbReference type="GO" id="GO:0016020">
    <property type="term" value="C:membrane"/>
    <property type="evidence" value="ECO:0007669"/>
    <property type="project" value="UniProtKB-SubCell"/>
</dbReference>
<dbReference type="GO" id="GO:0020037">
    <property type="term" value="F:heme binding"/>
    <property type="evidence" value="ECO:0007669"/>
    <property type="project" value="InterPro"/>
</dbReference>
<dbReference type="GO" id="GO:0005506">
    <property type="term" value="F:iron ion binding"/>
    <property type="evidence" value="ECO:0007669"/>
    <property type="project" value="InterPro"/>
</dbReference>
<dbReference type="GO" id="GO:0004497">
    <property type="term" value="F:monooxygenase activity"/>
    <property type="evidence" value="ECO:0000318"/>
    <property type="project" value="GO_Central"/>
</dbReference>
<dbReference type="GO" id="GO:0016709">
    <property type="term" value="F:oxidoreductase activity, acting on paired donors, with incorporation or reduction of molecular oxygen, NAD(P)H as one donor, and incorporation of one atom of oxygen"/>
    <property type="evidence" value="ECO:0000314"/>
    <property type="project" value="UniProtKB"/>
</dbReference>
<dbReference type="GO" id="GO:0016135">
    <property type="term" value="P:saponin biosynthetic process"/>
    <property type="evidence" value="ECO:0000314"/>
    <property type="project" value="UniProtKB"/>
</dbReference>
<dbReference type="CDD" id="cd20642">
    <property type="entry name" value="CYP72"/>
    <property type="match status" value="1"/>
</dbReference>
<dbReference type="FunFam" id="1.10.630.10:FF:000029">
    <property type="entry name" value="Cytochrome P450 734A1"/>
    <property type="match status" value="1"/>
</dbReference>
<dbReference type="Gene3D" id="1.10.630.10">
    <property type="entry name" value="Cytochrome P450"/>
    <property type="match status" value="1"/>
</dbReference>
<dbReference type="InterPro" id="IPR001128">
    <property type="entry name" value="Cyt_P450"/>
</dbReference>
<dbReference type="InterPro" id="IPR017972">
    <property type="entry name" value="Cyt_P450_CS"/>
</dbReference>
<dbReference type="InterPro" id="IPR002401">
    <property type="entry name" value="Cyt_P450_E_grp-I"/>
</dbReference>
<dbReference type="InterPro" id="IPR036396">
    <property type="entry name" value="Cyt_P450_sf"/>
</dbReference>
<dbReference type="InterPro" id="IPR050665">
    <property type="entry name" value="Cytochrome_P450_Monooxygen"/>
</dbReference>
<dbReference type="PANTHER" id="PTHR24282:SF255">
    <property type="entry name" value="CYTOCHROME P450 72A11-RELATED"/>
    <property type="match status" value="1"/>
</dbReference>
<dbReference type="PANTHER" id="PTHR24282">
    <property type="entry name" value="CYTOCHROME P450 FAMILY MEMBER"/>
    <property type="match status" value="1"/>
</dbReference>
<dbReference type="Pfam" id="PF00067">
    <property type="entry name" value="p450"/>
    <property type="match status" value="1"/>
</dbReference>
<dbReference type="PRINTS" id="PR00463">
    <property type="entry name" value="EP450I"/>
</dbReference>
<dbReference type="PRINTS" id="PR00385">
    <property type="entry name" value="P450"/>
</dbReference>
<dbReference type="SUPFAM" id="SSF48264">
    <property type="entry name" value="Cytochrome P450"/>
    <property type="match status" value="1"/>
</dbReference>
<dbReference type="PROSITE" id="PS00086">
    <property type="entry name" value="CYTOCHROME_P450"/>
    <property type="match status" value="1"/>
</dbReference>
<organism>
    <name type="scientific">Medicago truncatula</name>
    <name type="common">Barrel medic</name>
    <name type="synonym">Medicago tribuloides</name>
    <dbReference type="NCBI Taxonomy" id="3880"/>
    <lineage>
        <taxon>Eukaryota</taxon>
        <taxon>Viridiplantae</taxon>
        <taxon>Streptophyta</taxon>
        <taxon>Embryophyta</taxon>
        <taxon>Tracheophyta</taxon>
        <taxon>Spermatophyta</taxon>
        <taxon>Magnoliopsida</taxon>
        <taxon>eudicotyledons</taxon>
        <taxon>Gunneridae</taxon>
        <taxon>Pentapetalae</taxon>
        <taxon>rosids</taxon>
        <taxon>fabids</taxon>
        <taxon>Fabales</taxon>
        <taxon>Fabaceae</taxon>
        <taxon>Papilionoideae</taxon>
        <taxon>50 kb inversion clade</taxon>
        <taxon>NPAAA clade</taxon>
        <taxon>Hologalegina</taxon>
        <taxon>IRL clade</taxon>
        <taxon>Trifolieae</taxon>
        <taxon>Medicago</taxon>
    </lineage>
</organism>
<gene>
    <name evidence="4" type="primary">CYP72A67</name>
    <name evidence="6" type="ordered locus">MTR_2g023680</name>
</gene>
<name>C7A67_MEDTR</name>
<accession>Q2MJ21</accession>
<reference key="1">
    <citation type="journal article" date="2007" name="Planta">
        <title>Genome-wide identification and characterization of putative cytochrome P450 genes in the model legume Medicago truncatula.</title>
        <authorList>
            <person name="Li L."/>
            <person name="Cheng H."/>
            <person name="Gai J."/>
            <person name="Yu D."/>
        </authorList>
    </citation>
    <scope>NUCLEOTIDE SEQUENCE [MRNA]</scope>
    <source>
        <strain>cv. Jemalong</strain>
    </source>
</reference>
<reference key="2">
    <citation type="journal article" date="2011" name="Nature">
        <title>The Medicago genome provides insight into the evolution of rhizobial symbioses.</title>
        <authorList>
            <person name="Young N.D."/>
            <person name="Debelle F."/>
            <person name="Oldroyd G.E.D."/>
            <person name="Geurts R."/>
            <person name="Cannon S.B."/>
            <person name="Udvardi M.K."/>
            <person name="Benedito V.A."/>
            <person name="Mayer K.F.X."/>
            <person name="Gouzy J."/>
            <person name="Schoof H."/>
            <person name="Van de Peer Y."/>
            <person name="Proost S."/>
            <person name="Cook D.R."/>
            <person name="Meyers B.C."/>
            <person name="Spannagl M."/>
            <person name="Cheung F."/>
            <person name="De Mita S."/>
            <person name="Krishnakumar V."/>
            <person name="Gundlach H."/>
            <person name="Zhou S."/>
            <person name="Mudge J."/>
            <person name="Bharti A.K."/>
            <person name="Murray J.D."/>
            <person name="Naoumkina M.A."/>
            <person name="Rosen B."/>
            <person name="Silverstein K.A.T."/>
            <person name="Tang H."/>
            <person name="Rombauts S."/>
            <person name="Zhao P.X."/>
            <person name="Zhou P."/>
            <person name="Barbe V."/>
            <person name="Bardou P."/>
            <person name="Bechner M."/>
            <person name="Bellec A."/>
            <person name="Berger A."/>
            <person name="Berges H."/>
            <person name="Bidwell S."/>
            <person name="Bisseling T."/>
            <person name="Choisne N."/>
            <person name="Couloux A."/>
            <person name="Denny R."/>
            <person name="Deshpande S."/>
            <person name="Dai X."/>
            <person name="Doyle J.J."/>
            <person name="Dudez A.-M."/>
            <person name="Farmer A.D."/>
            <person name="Fouteau S."/>
            <person name="Franken C."/>
            <person name="Gibelin C."/>
            <person name="Gish J."/>
            <person name="Goldstein S."/>
            <person name="Gonzalez A.J."/>
            <person name="Green P.J."/>
            <person name="Hallab A."/>
            <person name="Hartog M."/>
            <person name="Hua A."/>
            <person name="Humphray S.J."/>
            <person name="Jeong D.-H."/>
            <person name="Jing Y."/>
            <person name="Jocker A."/>
            <person name="Kenton S.M."/>
            <person name="Kim D.-J."/>
            <person name="Klee K."/>
            <person name="Lai H."/>
            <person name="Lang C."/>
            <person name="Lin S."/>
            <person name="Macmil S.L."/>
            <person name="Magdelenat G."/>
            <person name="Matthews L."/>
            <person name="McCorrison J."/>
            <person name="Monaghan E.L."/>
            <person name="Mun J.-H."/>
            <person name="Najar F.Z."/>
            <person name="Nicholson C."/>
            <person name="Noirot C."/>
            <person name="O'Bleness M."/>
            <person name="Paule C.R."/>
            <person name="Poulain J."/>
            <person name="Prion F."/>
            <person name="Qin B."/>
            <person name="Qu C."/>
            <person name="Retzel E.F."/>
            <person name="Riddle C."/>
            <person name="Sallet E."/>
            <person name="Samain S."/>
            <person name="Samson N."/>
            <person name="Sanders I."/>
            <person name="Saurat O."/>
            <person name="Scarpelli C."/>
            <person name="Schiex T."/>
            <person name="Segurens B."/>
            <person name="Severin A.J."/>
            <person name="Sherrier D.J."/>
            <person name="Shi R."/>
            <person name="Sims S."/>
            <person name="Singer S.R."/>
            <person name="Sinharoy S."/>
            <person name="Sterck L."/>
            <person name="Viollet A."/>
            <person name="Wang B.-B."/>
            <person name="Wang K."/>
            <person name="Wang M."/>
            <person name="Wang X."/>
            <person name="Warfsmann J."/>
            <person name="Weissenbach J."/>
            <person name="White D.D."/>
            <person name="White J.D."/>
            <person name="Wiley G.B."/>
            <person name="Wincker P."/>
            <person name="Xing Y."/>
            <person name="Yang L."/>
            <person name="Yao Z."/>
            <person name="Ying F."/>
            <person name="Zhai J."/>
            <person name="Zhou L."/>
            <person name="Zuber A."/>
            <person name="Denarie J."/>
            <person name="Dixon R.A."/>
            <person name="May G.D."/>
            <person name="Schwartz D.C."/>
            <person name="Rogers J."/>
            <person name="Quetier F."/>
            <person name="Town C.D."/>
            <person name="Roe B.A."/>
        </authorList>
    </citation>
    <scope>NUCLEOTIDE SEQUENCE [LARGE SCALE GENOMIC DNA]</scope>
    <source>
        <strain>cv. Jemalong A17</strain>
    </source>
</reference>
<reference key="3">
    <citation type="journal article" date="2014" name="BMC Genomics">
        <title>An improved genome release (version Mt4.0) for the model legume Medicago truncatula.</title>
        <authorList>
            <person name="Tang H."/>
            <person name="Krishnakumar V."/>
            <person name="Bidwell S."/>
            <person name="Rosen B."/>
            <person name="Chan A."/>
            <person name="Zhou S."/>
            <person name="Gentzbittel L."/>
            <person name="Childs K.L."/>
            <person name="Yandell M."/>
            <person name="Gundlach H."/>
            <person name="Mayer K.F."/>
            <person name="Schwartz D.C."/>
            <person name="Town C.D."/>
        </authorList>
    </citation>
    <scope>GENOME REANNOTATION</scope>
    <source>
        <strain>cv. Jemalong A17</strain>
    </source>
</reference>
<reference key="4">
    <citation type="journal article" date="2015" name="Mol. Plant">
        <title>CYP72A67 catalyzes a key oxidative step in Medicago truncatula hemolytic saponin biosynthesis.</title>
        <authorList>
            <person name="Biazzi E."/>
            <person name="Carelli M."/>
            <person name="Tava A."/>
            <person name="Abbruscato P."/>
            <person name="Losini I."/>
            <person name="Avato P."/>
            <person name="Scotti C."/>
            <person name="Calderini O."/>
        </authorList>
    </citation>
    <scope>FUNCTION</scope>
    <source>
        <strain>cv. Jemalong</strain>
    </source>
</reference>
<proteinExistence type="evidence at transcript level"/>
<comment type="function">
    <text evidence="3">Catalyzes hydroxylation at the C-2 position of different intermediates of the hemolytic sapogenin biosynthetic pathway downstream of oleanolic acid synthesis.</text>
</comment>
<comment type="cofactor">
    <cofactor evidence="1">
        <name>heme</name>
        <dbReference type="ChEBI" id="CHEBI:30413"/>
    </cofactor>
</comment>
<comment type="subcellular location">
    <subcellularLocation>
        <location evidence="2">Membrane</location>
        <topology evidence="2">Single-pass membrane protein</topology>
    </subcellularLocation>
</comment>
<comment type="similarity">
    <text evidence="5">Belongs to the cytochrome P450 family.</text>
</comment>
<keyword id="KW-0349">Heme</keyword>
<keyword id="KW-0408">Iron</keyword>
<keyword id="KW-0472">Membrane</keyword>
<keyword id="KW-0479">Metal-binding</keyword>
<keyword id="KW-0503">Monooxygenase</keyword>
<keyword id="KW-0560">Oxidoreductase</keyword>
<keyword id="KW-1185">Reference proteome</keyword>
<keyword id="KW-0812">Transmembrane</keyword>
<keyword id="KW-1133">Transmembrane helix</keyword>
<protein>
    <recommendedName>
        <fullName evidence="4">Cytochrome P450 716A67</fullName>
        <ecNumber evidence="5">1.14.13.-</ecNumber>
    </recommendedName>
</protein>
<sequence>MEASLAIYYGIILITVTLGLVYTWRVLNWIWLKPKRLEKLLREQGCNGNSYRLVLGDLKDSYKMGKKAKSKPMELSDDIIPRVIPYIQQLVQIYGKNPFIWSGTTPRLILTEPELIKDVLNRTSELQKPKYEIFKFLFSGLIIHEGEKWRKHRRLMNAAFQLEKLKIMAPSFLTSCIDMISKWESTLSSDGSGEIDIWPSLQNLTSDVISRNAFGSSYEEGKRIFDLQREQGELVMKNLVKSLIPLWRFIPTATQRRMHEIEKDIDSSLRYIINKREKAMKAGEATENDLLGLLLESNHQEIRDHGNNKNMGMSLEDVVGECKLFYLAGQESTSTMLVWTMILLSRYPDWQERAREEVLQIFGNKKPDYEGLNKLKILPMILYEVLRLYPPAFGVTRYVGKDIKFGNMEVPAGVEVFLPIILLQHNNELWGDDAKMFNPERFAEGISKATNGRFIYFPFGGGPRVCMGQNFSLLEAKMAVSMILQNFYFELSPTYAHTPNLVMTIQPEKGAHVILRKVKA</sequence>